<feature type="chain" id="PRO_0000167978" description="Small ribosomal subunit protein bS20">
    <location>
        <begin position="1"/>
        <end position="88"/>
    </location>
</feature>
<evidence type="ECO:0000255" key="1">
    <source>
        <dbReference type="HAMAP-Rule" id="MF_00500"/>
    </source>
</evidence>
<evidence type="ECO:0000305" key="2"/>
<gene>
    <name evidence="1" type="primary">rpsT</name>
    <name type="ordered locus">lpp2689</name>
</gene>
<accession>Q5X1Q4</accession>
<name>RS20_LEGPA</name>
<dbReference type="EMBL" id="CR628336">
    <property type="protein sequence ID" value="CAH13842.1"/>
    <property type="molecule type" value="Genomic_DNA"/>
</dbReference>
<dbReference type="RefSeq" id="WP_010948336.1">
    <property type="nucleotide sequence ID" value="NC_006368.1"/>
</dbReference>
<dbReference type="SMR" id="Q5X1Q4"/>
<dbReference type="GeneID" id="57036635"/>
<dbReference type="KEGG" id="lpp:lpp2689"/>
<dbReference type="LegioList" id="lpp2689"/>
<dbReference type="HOGENOM" id="CLU_160655_4_0_6"/>
<dbReference type="GO" id="GO:0005829">
    <property type="term" value="C:cytosol"/>
    <property type="evidence" value="ECO:0007669"/>
    <property type="project" value="TreeGrafter"/>
</dbReference>
<dbReference type="GO" id="GO:0015935">
    <property type="term" value="C:small ribosomal subunit"/>
    <property type="evidence" value="ECO:0007669"/>
    <property type="project" value="TreeGrafter"/>
</dbReference>
<dbReference type="GO" id="GO:0070181">
    <property type="term" value="F:small ribosomal subunit rRNA binding"/>
    <property type="evidence" value="ECO:0007669"/>
    <property type="project" value="TreeGrafter"/>
</dbReference>
<dbReference type="GO" id="GO:0003735">
    <property type="term" value="F:structural constituent of ribosome"/>
    <property type="evidence" value="ECO:0007669"/>
    <property type="project" value="InterPro"/>
</dbReference>
<dbReference type="GO" id="GO:0006412">
    <property type="term" value="P:translation"/>
    <property type="evidence" value="ECO:0007669"/>
    <property type="project" value="UniProtKB-UniRule"/>
</dbReference>
<dbReference type="FunFam" id="1.20.58.110:FF:000001">
    <property type="entry name" value="30S ribosomal protein S20"/>
    <property type="match status" value="1"/>
</dbReference>
<dbReference type="Gene3D" id="1.20.58.110">
    <property type="entry name" value="Ribosomal protein S20"/>
    <property type="match status" value="1"/>
</dbReference>
<dbReference type="HAMAP" id="MF_00500">
    <property type="entry name" value="Ribosomal_bS20"/>
    <property type="match status" value="1"/>
</dbReference>
<dbReference type="InterPro" id="IPR002583">
    <property type="entry name" value="Ribosomal_bS20"/>
</dbReference>
<dbReference type="InterPro" id="IPR036510">
    <property type="entry name" value="Ribosomal_bS20_sf"/>
</dbReference>
<dbReference type="NCBIfam" id="TIGR00029">
    <property type="entry name" value="S20"/>
    <property type="match status" value="1"/>
</dbReference>
<dbReference type="PANTHER" id="PTHR33398">
    <property type="entry name" value="30S RIBOSOMAL PROTEIN S20"/>
    <property type="match status" value="1"/>
</dbReference>
<dbReference type="PANTHER" id="PTHR33398:SF1">
    <property type="entry name" value="SMALL RIBOSOMAL SUBUNIT PROTEIN BS20C"/>
    <property type="match status" value="1"/>
</dbReference>
<dbReference type="Pfam" id="PF01649">
    <property type="entry name" value="Ribosomal_S20p"/>
    <property type="match status" value="1"/>
</dbReference>
<dbReference type="SUPFAM" id="SSF46992">
    <property type="entry name" value="Ribosomal protein S20"/>
    <property type="match status" value="1"/>
</dbReference>
<proteinExistence type="inferred from homology"/>
<reference key="1">
    <citation type="journal article" date="2004" name="Nat. Genet.">
        <title>Evidence in the Legionella pneumophila genome for exploitation of host cell functions and high genome plasticity.</title>
        <authorList>
            <person name="Cazalet C."/>
            <person name="Rusniok C."/>
            <person name="Brueggemann H."/>
            <person name="Zidane N."/>
            <person name="Magnier A."/>
            <person name="Ma L."/>
            <person name="Tichit M."/>
            <person name="Jarraud S."/>
            <person name="Bouchier C."/>
            <person name="Vandenesch F."/>
            <person name="Kunst F."/>
            <person name="Etienne J."/>
            <person name="Glaser P."/>
            <person name="Buchrieser C."/>
        </authorList>
    </citation>
    <scope>NUCLEOTIDE SEQUENCE [LARGE SCALE GENOMIC DNA]</scope>
    <source>
        <strain>Paris</strain>
    </source>
</reference>
<keyword id="KW-0687">Ribonucleoprotein</keyword>
<keyword id="KW-0689">Ribosomal protein</keyword>
<keyword id="KW-0694">RNA-binding</keyword>
<keyword id="KW-0699">rRNA-binding</keyword>
<comment type="function">
    <text evidence="1">Binds directly to 16S ribosomal RNA.</text>
</comment>
<comment type="similarity">
    <text evidence="1">Belongs to the bacterial ribosomal protein bS20 family.</text>
</comment>
<protein>
    <recommendedName>
        <fullName evidence="1">Small ribosomal subunit protein bS20</fullName>
    </recommendedName>
    <alternativeName>
        <fullName evidence="2">30S ribosomal protein S20</fullName>
    </alternativeName>
</protein>
<organism>
    <name type="scientific">Legionella pneumophila (strain Paris)</name>
    <dbReference type="NCBI Taxonomy" id="297246"/>
    <lineage>
        <taxon>Bacteria</taxon>
        <taxon>Pseudomonadati</taxon>
        <taxon>Pseudomonadota</taxon>
        <taxon>Gammaproteobacteria</taxon>
        <taxon>Legionellales</taxon>
        <taxon>Legionellaceae</taxon>
        <taxon>Legionella</taxon>
    </lineage>
</organism>
<sequence length="88" mass="9714">MANIKSAIKRARQNVKLRQHNASARSMYRTYIKNVLKAVESGDQEAARAAYTKAQPVIDKAANKGLIHKNKAARIKGRLVARLKAMAA</sequence>